<name>YJT5_YEAST</name>
<accession>P39541</accession>
<reference key="1">
    <citation type="journal article" date="1994" name="Yeast">
        <title>The sequence of a 36 kb segment on the left arm of yeast chromosome X identifies 24 open reading frames including NUC1, PRP21 (SPP91), CDC6, CRY2, the gene for S24, a homologue to the aconitase gene ACO1 and two homologues to chromosome III genes.</title>
        <authorList>
            <person name="Purnelle B."/>
            <person name="Coster F."/>
            <person name="Goffeau A."/>
        </authorList>
    </citation>
    <scope>NUCLEOTIDE SEQUENCE [GENOMIC DNA]</scope>
    <source>
        <strain>ATCC 204508 / S288c</strain>
    </source>
</reference>
<reference key="2">
    <citation type="journal article" date="1996" name="EMBO J.">
        <title>Complete nucleotide sequence of Saccharomyces cerevisiae chromosome X.</title>
        <authorList>
            <person name="Galibert F."/>
            <person name="Alexandraki D."/>
            <person name="Baur A."/>
            <person name="Boles E."/>
            <person name="Chalwatzis N."/>
            <person name="Chuat J.-C."/>
            <person name="Coster F."/>
            <person name="Cziepluch C."/>
            <person name="de Haan M."/>
            <person name="Domdey H."/>
            <person name="Durand P."/>
            <person name="Entian K.-D."/>
            <person name="Gatius M."/>
            <person name="Goffeau A."/>
            <person name="Grivell L.A."/>
            <person name="Hennemann A."/>
            <person name="Herbert C.J."/>
            <person name="Heumann K."/>
            <person name="Hilger F."/>
            <person name="Hollenberg C.P."/>
            <person name="Huang M.-E."/>
            <person name="Jacq C."/>
            <person name="Jauniaux J.-C."/>
            <person name="Katsoulou C."/>
            <person name="Kirchrath L."/>
            <person name="Kleine K."/>
            <person name="Kordes E."/>
            <person name="Koetter P."/>
            <person name="Liebl S."/>
            <person name="Louis E.J."/>
            <person name="Manus V."/>
            <person name="Mewes H.-W."/>
            <person name="Miosga T."/>
            <person name="Obermaier B."/>
            <person name="Perea J."/>
            <person name="Pohl T.M."/>
            <person name="Portetelle D."/>
            <person name="Pujol A."/>
            <person name="Purnelle B."/>
            <person name="Ramezani Rad M."/>
            <person name="Rasmussen S.W."/>
            <person name="Rose M."/>
            <person name="Rossau R."/>
            <person name="Schaaff-Gerstenschlaeger I."/>
            <person name="Smits P.H.M."/>
            <person name="Scarcez T."/>
            <person name="Soriano N."/>
            <person name="To Van D."/>
            <person name="Tzermia M."/>
            <person name="Van Broekhoven A."/>
            <person name="Vandenbol M."/>
            <person name="Wedler H."/>
            <person name="von Wettstein D."/>
            <person name="Wambutt R."/>
            <person name="Zagulski M."/>
            <person name="Zollner A."/>
            <person name="Karpfinger-Hartl L."/>
        </authorList>
    </citation>
    <scope>NUCLEOTIDE SEQUENCE [LARGE SCALE GENOMIC DNA]</scope>
    <source>
        <strain>ATCC 204508 / S288c</strain>
    </source>
</reference>
<reference key="3">
    <citation type="journal article" date="2014" name="G3 (Bethesda)">
        <title>The reference genome sequence of Saccharomyces cerevisiae: Then and now.</title>
        <authorList>
            <person name="Engel S.R."/>
            <person name="Dietrich F.S."/>
            <person name="Fisk D.G."/>
            <person name="Binkley G."/>
            <person name="Balakrishnan R."/>
            <person name="Costanzo M.C."/>
            <person name="Dwight S.S."/>
            <person name="Hitz B.C."/>
            <person name="Karra K."/>
            <person name="Nash R.S."/>
            <person name="Weng S."/>
            <person name="Wong E.D."/>
            <person name="Lloyd P."/>
            <person name="Skrzypek M.S."/>
            <person name="Miyasato S.R."/>
            <person name="Simison M."/>
            <person name="Cherry J.M."/>
        </authorList>
    </citation>
    <scope>GENOME REANNOTATION</scope>
    <source>
        <strain>ATCC 204508 / S288c</strain>
    </source>
</reference>
<feature type="chain" id="PRO_0000203018" description="Putative uncharacterized protein YJL195C">
    <location>
        <begin position="1"/>
        <end position="233"/>
    </location>
</feature>
<feature type="transmembrane region" description="Helical" evidence="1">
    <location>
        <begin position="78"/>
        <end position="98"/>
    </location>
</feature>
<feature type="transmembrane region" description="Helical" evidence="1">
    <location>
        <begin position="113"/>
        <end position="133"/>
    </location>
</feature>
<feature type="transmembrane region" description="Helical" evidence="1">
    <location>
        <begin position="188"/>
        <end position="208"/>
    </location>
</feature>
<sequence>MFFICNVGPFRSWKESKIFWKMEDGSPNDIQLILVTATDSSLPSGNSNQDKFCKFGFVCLSTSFERGVESDNGRDWNFCLIIISSWAVLPVPGGPVMYSESDLCSEIAFAKKFITCSYSAVLAGNAPSLLFKLTSSDDFCKSAFVLKKIDCEPNCSFSGDDSGVTSVNCNFFLFKGRGGVAGASSNRFLLIRLVGVIGIADMNVYGTIDENSAAQCSEYSKIVLPENIPLLYK</sequence>
<keyword id="KW-0472">Membrane</keyword>
<keyword id="KW-0812">Transmembrane</keyword>
<keyword id="KW-1133">Transmembrane helix</keyword>
<proteinExistence type="uncertain"/>
<protein>
    <recommendedName>
        <fullName>Putative uncharacterized protein YJL195C</fullName>
    </recommendedName>
</protein>
<dbReference type="EMBL" id="X77688">
    <property type="protein sequence ID" value="CAA54765.1"/>
    <property type="molecule type" value="Genomic_DNA"/>
</dbReference>
<dbReference type="EMBL" id="Z49470">
    <property type="protein sequence ID" value="CAA89489.1"/>
    <property type="molecule type" value="Genomic_DNA"/>
</dbReference>
<dbReference type="PIR" id="S46639">
    <property type="entry name" value="S46639"/>
</dbReference>
<dbReference type="IntAct" id="P39541">
    <property type="interactions" value="2"/>
</dbReference>
<dbReference type="MINT" id="P39541"/>
<dbReference type="PaxDb" id="4932-YJL195C"/>
<dbReference type="EnsemblFungi" id="YJL195C_mRNA">
    <property type="protein sequence ID" value="YJL195C"/>
    <property type="gene ID" value="YJL195C"/>
</dbReference>
<dbReference type="AGR" id="SGD:S000003731"/>
<dbReference type="SGD" id="S000003731">
    <property type="gene designation" value="YJL195C"/>
</dbReference>
<dbReference type="HOGENOM" id="CLU_1190683_0_0_1"/>
<dbReference type="OMA" id="QCSEYSK"/>
<dbReference type="GO" id="GO:0016020">
    <property type="term" value="C:membrane"/>
    <property type="evidence" value="ECO:0007669"/>
    <property type="project" value="UniProtKB-SubCell"/>
</dbReference>
<gene>
    <name type="ordered locus">YJL195C</name>
    <name type="ORF">J0345</name>
</gene>
<evidence type="ECO:0000255" key="1"/>
<evidence type="ECO:0000305" key="2"/>
<evidence type="ECO:0000305" key="3">
    <source>
    </source>
</evidence>
<organism>
    <name type="scientific">Saccharomyces cerevisiae (strain ATCC 204508 / S288c)</name>
    <name type="common">Baker's yeast</name>
    <dbReference type="NCBI Taxonomy" id="559292"/>
    <lineage>
        <taxon>Eukaryota</taxon>
        <taxon>Fungi</taxon>
        <taxon>Dikarya</taxon>
        <taxon>Ascomycota</taxon>
        <taxon>Saccharomycotina</taxon>
        <taxon>Saccharomycetes</taxon>
        <taxon>Saccharomycetales</taxon>
        <taxon>Saccharomycetaceae</taxon>
        <taxon>Saccharomyces</taxon>
    </lineage>
</organism>
<comment type="subcellular location">
    <subcellularLocation>
        <location evidence="2">Membrane</location>
        <topology evidence="2">Multi-pass membrane protein</topology>
    </subcellularLocation>
</comment>
<comment type="miscellaneous">
    <text evidence="2">Partially overlaps CDC6.</text>
</comment>
<comment type="caution">
    <text evidence="3">Product of a dubious gene prediction unlikely to encode a functional protein. Because of that it is not part of the S.cerevisiae S288c complete/reference proteome set.</text>
</comment>